<evidence type="ECO:0000255" key="1">
    <source>
        <dbReference type="HAMAP-Rule" id="MF_00451"/>
    </source>
</evidence>
<evidence type="ECO:0000305" key="2"/>
<evidence type="ECO:0007829" key="3">
    <source>
        <dbReference type="PDB" id="2DXE"/>
    </source>
</evidence>
<organism>
    <name type="scientific">Pyrococcus horikoshii (strain ATCC 700860 / DSM 12428 / JCM 9974 / NBRC 100139 / OT-3)</name>
    <dbReference type="NCBI Taxonomy" id="70601"/>
    <lineage>
        <taxon>Archaea</taxon>
        <taxon>Methanobacteriati</taxon>
        <taxon>Methanobacteriota</taxon>
        <taxon>Thermococci</taxon>
        <taxon>Thermococcales</taxon>
        <taxon>Thermococcaceae</taxon>
        <taxon>Pyrococcus</taxon>
    </lineage>
</organism>
<reference key="1">
    <citation type="journal article" date="1998" name="DNA Res.">
        <title>Complete sequence and gene organization of the genome of a hyper-thermophilic archaebacterium, Pyrococcus horikoshii OT3.</title>
        <authorList>
            <person name="Kawarabayasi Y."/>
            <person name="Sawada M."/>
            <person name="Horikawa H."/>
            <person name="Haikawa Y."/>
            <person name="Hino Y."/>
            <person name="Yamamoto S."/>
            <person name="Sekine M."/>
            <person name="Baba S."/>
            <person name="Kosugi H."/>
            <person name="Hosoyama A."/>
            <person name="Nagai Y."/>
            <person name="Sakai M."/>
            <person name="Ogura K."/>
            <person name="Otsuka R."/>
            <person name="Nakazawa H."/>
            <person name="Takamiya M."/>
            <person name="Ohfuku Y."/>
            <person name="Funahashi T."/>
            <person name="Tanaka T."/>
            <person name="Kudoh Y."/>
            <person name="Yamazaki J."/>
            <person name="Kushida N."/>
            <person name="Oguchi A."/>
            <person name="Aoki K."/>
            <person name="Yoshizawa T."/>
            <person name="Nakamura Y."/>
            <person name="Robb F.T."/>
            <person name="Horikoshi K."/>
            <person name="Masuchi Y."/>
            <person name="Shizuya H."/>
            <person name="Kikuchi H."/>
        </authorList>
    </citation>
    <scope>NUCLEOTIDE SEQUENCE [LARGE SCALE GENOMIC DNA]</scope>
    <source>
        <strain>ATCC 700860 / DSM 12428 / JCM 9974 / NBRC 100139 / OT-3</strain>
    </source>
</reference>
<reference key="2">
    <citation type="submission" date="2005-12" db="PDB data bank">
        <title>Crystal structure of nucleotide diphosphate kinase from Pyrococcus horikoshii.</title>
        <authorList>
            <consortium name="RIKEN structural genomics initiative (RSGI)"/>
        </authorList>
    </citation>
    <scope>X-RAY CRYSTALLOGRAPHY (1.75 ANGSTROMS)</scope>
</reference>
<feature type="chain" id="PRO_0000137099" description="Nucleoside diphosphate kinase">
    <location>
        <begin position="1"/>
        <end position="157"/>
    </location>
</feature>
<feature type="active site" description="Pros-phosphohistidine intermediate" evidence="1">
    <location>
        <position position="121"/>
    </location>
</feature>
<feature type="binding site" evidence="1">
    <location>
        <position position="12"/>
    </location>
    <ligand>
        <name>ATP</name>
        <dbReference type="ChEBI" id="CHEBI:30616"/>
    </ligand>
</feature>
<feature type="binding site" evidence="1">
    <location>
        <position position="60"/>
    </location>
    <ligand>
        <name>ATP</name>
        <dbReference type="ChEBI" id="CHEBI:30616"/>
    </ligand>
</feature>
<feature type="binding site" evidence="1">
    <location>
        <position position="88"/>
    </location>
    <ligand>
        <name>ATP</name>
        <dbReference type="ChEBI" id="CHEBI:30616"/>
    </ligand>
</feature>
<feature type="binding site" evidence="1">
    <location>
        <position position="94"/>
    </location>
    <ligand>
        <name>ATP</name>
        <dbReference type="ChEBI" id="CHEBI:30616"/>
    </ligand>
</feature>
<feature type="binding site" evidence="1">
    <location>
        <position position="105"/>
    </location>
    <ligand>
        <name>ATP</name>
        <dbReference type="ChEBI" id="CHEBI:30616"/>
    </ligand>
</feature>
<feature type="strand" evidence="3">
    <location>
        <begin position="4"/>
        <end position="11"/>
    </location>
</feature>
<feature type="helix" evidence="3">
    <location>
        <begin position="13"/>
        <end position="17"/>
    </location>
</feature>
<feature type="helix" evidence="3">
    <location>
        <begin position="21"/>
        <end position="31"/>
    </location>
</feature>
<feature type="strand" evidence="3">
    <location>
        <begin position="34"/>
        <end position="41"/>
    </location>
</feature>
<feature type="helix" evidence="3">
    <location>
        <begin position="45"/>
        <end position="51"/>
    </location>
</feature>
<feature type="helix" evidence="3">
    <location>
        <begin position="53"/>
        <end position="55"/>
    </location>
</feature>
<feature type="helix" evidence="3">
    <location>
        <begin position="61"/>
        <end position="68"/>
    </location>
</feature>
<feature type="strand" evidence="3">
    <location>
        <begin position="73"/>
        <end position="81"/>
    </location>
</feature>
<feature type="helix" evidence="3">
    <location>
        <begin position="83"/>
        <end position="91"/>
    </location>
</feature>
<feature type="helix" evidence="3">
    <location>
        <begin position="96"/>
        <end position="98"/>
    </location>
</feature>
<feature type="helix" evidence="3">
    <location>
        <begin position="104"/>
        <end position="108"/>
    </location>
</feature>
<feature type="strand" evidence="3">
    <location>
        <begin position="113"/>
        <end position="115"/>
    </location>
</feature>
<feature type="strand" evidence="3">
    <location>
        <begin position="119"/>
        <end position="122"/>
    </location>
</feature>
<feature type="helix" evidence="3">
    <location>
        <begin position="126"/>
        <end position="136"/>
    </location>
</feature>
<feature type="helix" evidence="3">
    <location>
        <begin position="139"/>
        <end position="141"/>
    </location>
</feature>
<feature type="helix" evidence="3">
    <location>
        <begin position="150"/>
        <end position="153"/>
    </location>
</feature>
<name>NDK_PYRHO</name>
<sequence length="157" mass="17908">MSETERTLVIIKPDAVVRGLIGEIISRFEKKGLKIVGMKMIWIDRELAEKHYEEHREKPFFKALIDYITKTPVVVMVLEGRYAVEVVRKMAGATDPKDAAPGTIRGDFGLEVSDAICNVIHASDSKESAEREISLFFKPEELFEYPRAADWFYKKGI</sequence>
<proteinExistence type="evidence at protein level"/>
<keyword id="KW-0002">3D-structure</keyword>
<keyword id="KW-0067">ATP-binding</keyword>
<keyword id="KW-0963">Cytoplasm</keyword>
<keyword id="KW-0418">Kinase</keyword>
<keyword id="KW-0460">Magnesium</keyword>
<keyword id="KW-0479">Metal-binding</keyword>
<keyword id="KW-0546">Nucleotide metabolism</keyword>
<keyword id="KW-0547">Nucleotide-binding</keyword>
<keyword id="KW-0597">Phosphoprotein</keyword>
<keyword id="KW-0808">Transferase</keyword>
<protein>
    <recommendedName>
        <fullName evidence="1">Nucleoside diphosphate kinase</fullName>
        <shortName evidence="1">NDK</shortName>
        <shortName evidence="1">NDP kinase</shortName>
        <ecNumber evidence="1">2.7.4.6</ecNumber>
    </recommendedName>
    <alternativeName>
        <fullName evidence="1">Nucleoside-2-P kinase</fullName>
    </alternativeName>
</protein>
<dbReference type="EC" id="2.7.4.6" evidence="1"/>
<dbReference type="EMBL" id="BA000001">
    <property type="protein sequence ID" value="BAA29789.1"/>
    <property type="status" value="ALT_INIT"/>
    <property type="molecule type" value="Genomic_DNA"/>
</dbReference>
<dbReference type="PIR" id="C71116">
    <property type="entry name" value="C71116"/>
</dbReference>
<dbReference type="RefSeq" id="WP_048053198.1">
    <property type="nucleotide sequence ID" value="NC_000961.1"/>
</dbReference>
<dbReference type="PDB" id="2CWK">
    <property type="method" value="X-ray"/>
    <property type="resolution" value="1.75 A"/>
    <property type="chains" value="A/B=1-157"/>
</dbReference>
<dbReference type="PDB" id="2DXD">
    <property type="method" value="X-ray"/>
    <property type="resolution" value="1.77 A"/>
    <property type="chains" value="A/B=1-157"/>
</dbReference>
<dbReference type="PDB" id="2DXE">
    <property type="method" value="X-ray"/>
    <property type="resolution" value="1.70 A"/>
    <property type="chains" value="A/B=1-157"/>
</dbReference>
<dbReference type="PDB" id="2DXF">
    <property type="method" value="X-ray"/>
    <property type="resolution" value="1.70 A"/>
    <property type="chains" value="A/B=1-157"/>
</dbReference>
<dbReference type="PDB" id="2DY9">
    <property type="method" value="X-ray"/>
    <property type="resolution" value="2.01 A"/>
    <property type="chains" value="A/B=1-157"/>
</dbReference>
<dbReference type="PDB" id="2DYA">
    <property type="method" value="X-ray"/>
    <property type="resolution" value="1.77 A"/>
    <property type="chains" value="A/B=1-157"/>
</dbReference>
<dbReference type="PDBsum" id="2CWK"/>
<dbReference type="PDBsum" id="2DXD"/>
<dbReference type="PDBsum" id="2DXE"/>
<dbReference type="PDBsum" id="2DXF"/>
<dbReference type="PDBsum" id="2DY9"/>
<dbReference type="PDBsum" id="2DYA"/>
<dbReference type="SMR" id="O58429"/>
<dbReference type="STRING" id="70601.gene:9377645"/>
<dbReference type="EnsemblBacteria" id="BAA29789">
    <property type="protein sequence ID" value="BAA29789"/>
    <property type="gene ID" value="BAA29789"/>
</dbReference>
<dbReference type="GeneID" id="1443028"/>
<dbReference type="KEGG" id="pho:PH0698"/>
<dbReference type="eggNOG" id="arCOG04313">
    <property type="taxonomic scope" value="Archaea"/>
</dbReference>
<dbReference type="OrthoDB" id="6874at2157"/>
<dbReference type="EvolutionaryTrace" id="O58429"/>
<dbReference type="Proteomes" id="UP000000752">
    <property type="component" value="Chromosome"/>
</dbReference>
<dbReference type="GO" id="GO:0005737">
    <property type="term" value="C:cytoplasm"/>
    <property type="evidence" value="ECO:0007669"/>
    <property type="project" value="UniProtKB-SubCell"/>
</dbReference>
<dbReference type="GO" id="GO:0005524">
    <property type="term" value="F:ATP binding"/>
    <property type="evidence" value="ECO:0007669"/>
    <property type="project" value="UniProtKB-UniRule"/>
</dbReference>
<dbReference type="GO" id="GO:0046872">
    <property type="term" value="F:metal ion binding"/>
    <property type="evidence" value="ECO:0007669"/>
    <property type="project" value="UniProtKB-KW"/>
</dbReference>
<dbReference type="GO" id="GO:0004550">
    <property type="term" value="F:nucleoside diphosphate kinase activity"/>
    <property type="evidence" value="ECO:0007669"/>
    <property type="project" value="UniProtKB-UniRule"/>
</dbReference>
<dbReference type="GO" id="GO:0006241">
    <property type="term" value="P:CTP biosynthetic process"/>
    <property type="evidence" value="ECO:0007669"/>
    <property type="project" value="UniProtKB-UniRule"/>
</dbReference>
<dbReference type="GO" id="GO:0006183">
    <property type="term" value="P:GTP biosynthetic process"/>
    <property type="evidence" value="ECO:0007669"/>
    <property type="project" value="UniProtKB-UniRule"/>
</dbReference>
<dbReference type="GO" id="GO:0006228">
    <property type="term" value="P:UTP biosynthetic process"/>
    <property type="evidence" value="ECO:0007669"/>
    <property type="project" value="UniProtKB-UniRule"/>
</dbReference>
<dbReference type="CDD" id="cd04413">
    <property type="entry name" value="NDPk_I"/>
    <property type="match status" value="1"/>
</dbReference>
<dbReference type="FunFam" id="3.30.70.141:FF:000003">
    <property type="entry name" value="Nucleoside diphosphate kinase"/>
    <property type="match status" value="1"/>
</dbReference>
<dbReference type="Gene3D" id="3.30.70.141">
    <property type="entry name" value="Nucleoside diphosphate kinase-like domain"/>
    <property type="match status" value="1"/>
</dbReference>
<dbReference type="HAMAP" id="MF_00451">
    <property type="entry name" value="NDP_kinase"/>
    <property type="match status" value="1"/>
</dbReference>
<dbReference type="InterPro" id="IPR034907">
    <property type="entry name" value="NDK-like_dom"/>
</dbReference>
<dbReference type="InterPro" id="IPR036850">
    <property type="entry name" value="NDK-like_dom_sf"/>
</dbReference>
<dbReference type="InterPro" id="IPR001564">
    <property type="entry name" value="Nucleoside_diP_kinase"/>
</dbReference>
<dbReference type="InterPro" id="IPR023005">
    <property type="entry name" value="Nucleoside_diP_kinase_AS"/>
</dbReference>
<dbReference type="NCBIfam" id="NF001908">
    <property type="entry name" value="PRK00668.1"/>
    <property type="match status" value="1"/>
</dbReference>
<dbReference type="PANTHER" id="PTHR11349">
    <property type="entry name" value="NUCLEOSIDE DIPHOSPHATE KINASE"/>
    <property type="match status" value="1"/>
</dbReference>
<dbReference type="Pfam" id="PF00334">
    <property type="entry name" value="NDK"/>
    <property type="match status" value="1"/>
</dbReference>
<dbReference type="PRINTS" id="PR01243">
    <property type="entry name" value="NUCDPKINASE"/>
</dbReference>
<dbReference type="SMART" id="SM00562">
    <property type="entry name" value="NDK"/>
    <property type="match status" value="1"/>
</dbReference>
<dbReference type="SUPFAM" id="SSF54919">
    <property type="entry name" value="Nucleoside diphosphate kinase, NDK"/>
    <property type="match status" value="1"/>
</dbReference>
<dbReference type="PROSITE" id="PS00469">
    <property type="entry name" value="NDPK"/>
    <property type="match status" value="1"/>
</dbReference>
<dbReference type="PROSITE" id="PS51374">
    <property type="entry name" value="NDPK_LIKE"/>
    <property type="match status" value="1"/>
</dbReference>
<comment type="function">
    <text evidence="1">Major role in the synthesis of nucleoside triphosphates other than ATP. The ATP gamma phosphate is transferred to the NDP beta phosphate via a ping-pong mechanism, using a phosphorylated active-site intermediate.</text>
</comment>
<comment type="catalytic activity">
    <reaction evidence="1">
        <text>a 2'-deoxyribonucleoside 5'-diphosphate + ATP = a 2'-deoxyribonucleoside 5'-triphosphate + ADP</text>
        <dbReference type="Rhea" id="RHEA:44640"/>
        <dbReference type="ChEBI" id="CHEBI:30616"/>
        <dbReference type="ChEBI" id="CHEBI:61560"/>
        <dbReference type="ChEBI" id="CHEBI:73316"/>
        <dbReference type="ChEBI" id="CHEBI:456216"/>
        <dbReference type="EC" id="2.7.4.6"/>
    </reaction>
</comment>
<comment type="catalytic activity">
    <reaction evidence="1">
        <text>a ribonucleoside 5'-diphosphate + ATP = a ribonucleoside 5'-triphosphate + ADP</text>
        <dbReference type="Rhea" id="RHEA:18113"/>
        <dbReference type="ChEBI" id="CHEBI:30616"/>
        <dbReference type="ChEBI" id="CHEBI:57930"/>
        <dbReference type="ChEBI" id="CHEBI:61557"/>
        <dbReference type="ChEBI" id="CHEBI:456216"/>
        <dbReference type="EC" id="2.7.4.6"/>
    </reaction>
</comment>
<comment type="cofactor">
    <cofactor evidence="1">
        <name>Mg(2+)</name>
        <dbReference type="ChEBI" id="CHEBI:18420"/>
    </cofactor>
</comment>
<comment type="subcellular location">
    <subcellularLocation>
        <location evidence="1">Cytoplasm</location>
    </subcellularLocation>
</comment>
<comment type="similarity">
    <text evidence="1 2">Belongs to the NDK family.</text>
</comment>
<comment type="sequence caution" evidence="2">
    <conflict type="erroneous initiation">
        <sequence resource="EMBL-CDS" id="BAA29789"/>
    </conflict>
</comment>
<accession>O58429</accession>
<gene>
    <name evidence="1" type="primary">ndk</name>
    <name type="ordered locus">PH0698</name>
</gene>